<gene>
    <name evidence="10" type="primary">SLC1A7</name>
    <name type="synonym">EAAT5</name>
</gene>
<keyword id="KW-0025">Alternative splicing</keyword>
<keyword id="KW-1003">Cell membrane</keyword>
<keyword id="KW-0325">Glycoprotein</keyword>
<keyword id="KW-0472">Membrane</keyword>
<keyword id="KW-1267">Proteomics identification</keyword>
<keyword id="KW-1185">Reference proteome</keyword>
<keyword id="KW-0769">Symport</keyword>
<keyword id="KW-0770">Synapse</keyword>
<keyword id="KW-0812">Transmembrane</keyword>
<keyword id="KW-1133">Transmembrane helix</keyword>
<keyword id="KW-0813">Transport</keyword>
<organism>
    <name type="scientific">Homo sapiens</name>
    <name type="common">Human</name>
    <dbReference type="NCBI Taxonomy" id="9606"/>
    <lineage>
        <taxon>Eukaryota</taxon>
        <taxon>Metazoa</taxon>
        <taxon>Chordata</taxon>
        <taxon>Craniata</taxon>
        <taxon>Vertebrata</taxon>
        <taxon>Euteleostomi</taxon>
        <taxon>Mammalia</taxon>
        <taxon>Eutheria</taxon>
        <taxon>Euarchontoglires</taxon>
        <taxon>Primates</taxon>
        <taxon>Haplorrhini</taxon>
        <taxon>Catarrhini</taxon>
        <taxon>Hominidae</taxon>
        <taxon>Homo</taxon>
    </lineage>
</organism>
<feature type="chain" id="PRO_0000202073" description="Excitatory amino acid transporter 5">
    <location>
        <begin position="1"/>
        <end position="560"/>
    </location>
</feature>
<feature type="topological domain" description="Cytoplasmic" evidence="2">
    <location>
        <begin position="1"/>
        <end position="16"/>
    </location>
</feature>
<feature type="transmembrane region" description="Helical" evidence="2">
    <location>
        <begin position="17"/>
        <end position="37"/>
    </location>
</feature>
<feature type="transmembrane region" description="Helical" evidence="2">
    <location>
        <begin position="60"/>
        <end position="80"/>
    </location>
</feature>
<feature type="transmembrane region" description="Helical" evidence="2">
    <location>
        <begin position="94"/>
        <end position="114"/>
    </location>
</feature>
<feature type="topological domain" description="Extracellular" evidence="2">
    <location>
        <begin position="115"/>
        <end position="216"/>
    </location>
</feature>
<feature type="transmembrane region" description="Helical" evidence="2">
    <location>
        <begin position="217"/>
        <end position="237"/>
    </location>
</feature>
<feature type="transmembrane region" description="Helical" evidence="2">
    <location>
        <begin position="260"/>
        <end position="280"/>
    </location>
</feature>
<feature type="transmembrane region" description="Helical" evidence="2">
    <location>
        <begin position="300"/>
        <end position="320"/>
    </location>
</feature>
<feature type="transmembrane region" description="Helical" evidence="2">
    <location>
        <begin position="330"/>
        <end position="350"/>
    </location>
</feature>
<feature type="transmembrane region" description="Helical" evidence="2">
    <location>
        <begin position="372"/>
        <end position="392"/>
    </location>
</feature>
<feature type="transmembrane region" description="Helical" evidence="2">
    <location>
        <begin position="414"/>
        <end position="434"/>
    </location>
</feature>
<feature type="transmembrane region" description="Helical" evidence="2">
    <location>
        <begin position="457"/>
        <end position="477"/>
    </location>
</feature>
<feature type="glycosylation site" description="N-linked (GlcNAc...) asparagine" evidence="2">
    <location>
        <position position="191"/>
    </location>
</feature>
<feature type="splice variant" id="VSP_056560" description="In isoform 2." evidence="7">
    <original>NMFPANLVEATFKQ</original>
    <variation>QKEESWRNGPKGPG</variation>
    <location>
        <begin position="145"/>
        <end position="158"/>
    </location>
</feature>
<feature type="splice variant" id="VSP_056561" description="In isoform 2." evidence="7">
    <location>
        <begin position="159"/>
        <end position="560"/>
    </location>
</feature>
<feature type="sequence variant" id="VAR_035707" description="In a colorectal cancer sample; somatic mutation; dbSNP:rs375136400." evidence="4">
    <original>R</original>
    <variation>C</variation>
    <location>
        <position position="41"/>
    </location>
</feature>
<feature type="sequence variant" id="VAR_052488" description="In dbSNP:rs1288401." evidence="3 5 6">
    <original>Q</original>
    <variation>R</variation>
    <location>
        <position position="537"/>
    </location>
</feature>
<feature type="sequence conflict" description="In Ref. 1; AAB53971." evidence="8" ref="1">
    <original>A</original>
    <variation>T</variation>
    <location>
        <position position="5"/>
    </location>
</feature>
<feature type="sequence conflict" description="In Ref. 1; AAB53971." evidence="8" ref="1">
    <original>V</original>
    <variation>F</variation>
    <location>
        <position position="70"/>
    </location>
</feature>
<feature type="sequence conflict" description="In Ref. 1; AAB53971." evidence="8" ref="1">
    <original>A</original>
    <variation>G</variation>
    <location>
        <position position="244"/>
    </location>
</feature>
<feature type="sequence conflict" description="In Ref. 1; AAB53971." evidence="8" ref="1">
    <original>A</original>
    <variation>G</variation>
    <location>
        <position position="412"/>
    </location>
</feature>
<feature type="sequence conflict" description="In Ref. 1; AAB53971." evidence="8" ref="1">
    <original>A</original>
    <variation>G</variation>
    <location>
        <position position="449"/>
    </location>
</feature>
<evidence type="ECO:0000250" key="1">
    <source>
        <dbReference type="UniProtKB" id="Q8JZR4"/>
    </source>
</evidence>
<evidence type="ECO:0000255" key="2"/>
<evidence type="ECO:0000269" key="3">
    <source>
    </source>
</evidence>
<evidence type="ECO:0000269" key="4">
    <source>
    </source>
</evidence>
<evidence type="ECO:0000269" key="5">
    <source>
    </source>
</evidence>
<evidence type="ECO:0000269" key="6">
    <source ref="3"/>
</evidence>
<evidence type="ECO:0000303" key="7">
    <source>
    </source>
</evidence>
<evidence type="ECO:0000305" key="8"/>
<evidence type="ECO:0000305" key="9">
    <source>
    </source>
</evidence>
<evidence type="ECO:0000312" key="10">
    <source>
        <dbReference type="HGNC" id="HGNC:10945"/>
    </source>
</evidence>
<protein>
    <recommendedName>
        <fullName evidence="8">Excitatory amino acid transporter 5</fullName>
    </recommendedName>
    <alternativeName>
        <fullName>Retinal glutamate transporter</fullName>
    </alternativeName>
    <alternativeName>
        <fullName>Solute carrier family 1 member 7</fullName>
    </alternativeName>
</protein>
<sequence>MVPHAILARGRDVCRRNGLLILSVLSVIVGCLLGFFLRTRRLSPQEISYFQFPGELLMRMLKMMILPLVVSSLMSGLASLDAKTSSRLGVLTVAYYLWTTFMAVIVGIFMVSIIHPGSAAQKETTEQSGKPIMSSADALLDLIRNMFPANLVEATFKQYRTKTTPVVKSPKVAPEEAPPRRILIYGVQEENGSHVQNFALDLTPPPEVVYKSEPGTSDGMNVLGIVFFSATMGIMLGRMGDSGAPLVSFCQCLNESVMKIVAVAVWYFPFGIVFLIAGKILEMDDPRAVGKKLGFYSVTVVCGLVLHGLFILPLLYFFITKKNPIVFIRGILQALLIALATSSSSATLPITFKCLLENNHIDRRIARFVLPVGATINMDGTALYEAVAAIFIAQVNNYELDFGQIITISITATAASIGAAGIPQAGLVTMVIVLTSVGLPTDDITLIIAVDWALDRFRTMINVLGDALAAGIMAHICRKDFARDTGTEKLLPCETKPVSLQEIVAAQQNGCVKSVAEASELTLGPTCPHHVPVQVEQDEELPAASLNHCTIQISELETNV</sequence>
<dbReference type="EMBL" id="U76362">
    <property type="protein sequence ID" value="AAB53971.1"/>
    <property type="molecule type" value="mRNA"/>
</dbReference>
<dbReference type="EMBL" id="AL445183">
    <property type="status" value="NOT_ANNOTATED_CDS"/>
    <property type="molecule type" value="Genomic_DNA"/>
</dbReference>
<dbReference type="EMBL" id="CH471059">
    <property type="protein sequence ID" value="EAX06754.1"/>
    <property type="molecule type" value="Genomic_DNA"/>
</dbReference>
<dbReference type="EMBL" id="CH471059">
    <property type="protein sequence ID" value="EAX06755.1"/>
    <property type="molecule type" value="Genomic_DNA"/>
</dbReference>
<dbReference type="EMBL" id="BC000651">
    <property type="protein sequence ID" value="AAH00651.1"/>
    <property type="molecule type" value="mRNA"/>
</dbReference>
<dbReference type="EMBL" id="BC012119">
    <property type="protein sequence ID" value="AAH12119.1"/>
    <property type="molecule type" value="mRNA"/>
</dbReference>
<dbReference type="EMBL" id="BC017242">
    <property type="protein sequence ID" value="AAH17242.1"/>
    <property type="molecule type" value="mRNA"/>
</dbReference>
<dbReference type="CCDS" id="CCDS574.1">
    <molecule id="O00341-1"/>
</dbReference>
<dbReference type="CCDS" id="CCDS72798.1">
    <molecule id="O00341-2"/>
</dbReference>
<dbReference type="RefSeq" id="NP_001274525.1">
    <molecule id="O00341-2"/>
    <property type="nucleotide sequence ID" value="NM_001287596.2"/>
</dbReference>
<dbReference type="RefSeq" id="NP_001274526.1">
    <property type="nucleotide sequence ID" value="NM_001287597.1"/>
</dbReference>
<dbReference type="RefSeq" id="NP_006662.3">
    <molecule id="O00341-1"/>
    <property type="nucleotide sequence ID" value="NM_006671.5"/>
</dbReference>
<dbReference type="SMR" id="O00341"/>
<dbReference type="BioGRID" id="112403">
    <property type="interactions" value="2"/>
</dbReference>
<dbReference type="FunCoup" id="O00341">
    <property type="interactions" value="268"/>
</dbReference>
<dbReference type="IntAct" id="O00341">
    <property type="interactions" value="2"/>
</dbReference>
<dbReference type="STRING" id="9606.ENSP00000478639"/>
<dbReference type="DrugBank" id="DB00142">
    <property type="generic name" value="Glutamic acid"/>
</dbReference>
<dbReference type="GuidetoPHARMACOLOGY" id="872"/>
<dbReference type="TCDB" id="2.A.23.2.5">
    <property type="family name" value="the dicarboxylate/amino acid:cation (na(+) or h(+)) symporter (daacs) family"/>
</dbReference>
<dbReference type="GlyCosmos" id="O00341">
    <property type="glycosylation" value="1 site, No reported glycans"/>
</dbReference>
<dbReference type="GlyGen" id="O00341">
    <property type="glycosylation" value="1 site"/>
</dbReference>
<dbReference type="iPTMnet" id="O00341"/>
<dbReference type="PhosphoSitePlus" id="O00341"/>
<dbReference type="BioMuta" id="SLC1A7"/>
<dbReference type="jPOST" id="O00341"/>
<dbReference type="MassIVE" id="O00341"/>
<dbReference type="PaxDb" id="9606-ENSP00000478639"/>
<dbReference type="PeptideAtlas" id="O00341"/>
<dbReference type="Antibodypedia" id="46889">
    <property type="antibodies" value="128 antibodies from 22 providers"/>
</dbReference>
<dbReference type="DNASU" id="6512"/>
<dbReference type="Ensembl" id="ENST00000371491.4">
    <molecule id="O00341-2"/>
    <property type="protein sequence ID" value="ENSP00000360546.4"/>
    <property type="gene ID" value="ENSG00000162383.13"/>
</dbReference>
<dbReference type="Ensembl" id="ENST00000371494.9">
    <molecule id="O00341-1"/>
    <property type="protein sequence ID" value="ENSP00000360549.5"/>
    <property type="gene ID" value="ENSG00000162383.13"/>
</dbReference>
<dbReference type="GeneID" id="6512"/>
<dbReference type="KEGG" id="hsa:6512"/>
<dbReference type="MANE-Select" id="ENST00000371494.9">
    <property type="protein sequence ID" value="ENSP00000360549.5"/>
    <property type="RefSeq nucleotide sequence ID" value="NM_006671.6"/>
    <property type="RefSeq protein sequence ID" value="NP_006662.3"/>
</dbReference>
<dbReference type="UCSC" id="uc001cuy.5">
    <molecule id="O00341-1"/>
    <property type="organism name" value="human"/>
</dbReference>
<dbReference type="AGR" id="HGNC:10945"/>
<dbReference type="CTD" id="6512"/>
<dbReference type="DisGeNET" id="6512"/>
<dbReference type="GeneCards" id="SLC1A7"/>
<dbReference type="HGNC" id="HGNC:10945">
    <property type="gene designation" value="SLC1A7"/>
</dbReference>
<dbReference type="HPA" id="ENSG00000162383">
    <property type="expression patterns" value="Tissue enriched (retina)"/>
</dbReference>
<dbReference type="MIM" id="604471">
    <property type="type" value="gene"/>
</dbReference>
<dbReference type="neXtProt" id="NX_O00341"/>
<dbReference type="OpenTargets" id="ENSG00000162383"/>
<dbReference type="PharmGKB" id="PA35832"/>
<dbReference type="VEuPathDB" id="HostDB:ENSG00000162383"/>
<dbReference type="GeneTree" id="ENSGT00940000156073"/>
<dbReference type="InParanoid" id="O00341"/>
<dbReference type="OMA" id="IMNLAPY"/>
<dbReference type="OrthoDB" id="5877963at2759"/>
<dbReference type="PAN-GO" id="O00341">
    <property type="GO annotations" value="5 GO annotations based on evolutionary models"/>
</dbReference>
<dbReference type="PhylomeDB" id="O00341"/>
<dbReference type="TreeFam" id="TF315206"/>
<dbReference type="PathwayCommons" id="O00341"/>
<dbReference type="Reactome" id="R-HSA-210500">
    <property type="pathway name" value="Glutamate Neurotransmitter Release Cycle"/>
</dbReference>
<dbReference type="Reactome" id="R-HSA-425393">
    <property type="pathway name" value="Transport of inorganic cations/anions and amino acids/oligopeptides"/>
</dbReference>
<dbReference type="SignaLink" id="O00341"/>
<dbReference type="SIGNOR" id="O00341"/>
<dbReference type="BioGRID-ORCS" id="6512">
    <property type="hits" value="9 hits in 1152 CRISPR screens"/>
</dbReference>
<dbReference type="GeneWiki" id="Excitatory_amino-acid_transporter_5"/>
<dbReference type="GenomeRNAi" id="6512"/>
<dbReference type="Pharos" id="O00341">
    <property type="development level" value="Tchem"/>
</dbReference>
<dbReference type="PRO" id="PR:O00341"/>
<dbReference type="Proteomes" id="UP000005640">
    <property type="component" value="Chromosome 1"/>
</dbReference>
<dbReference type="RNAct" id="O00341">
    <property type="molecule type" value="protein"/>
</dbReference>
<dbReference type="Bgee" id="ENSG00000162383">
    <property type="expression patterns" value="Expressed in mucosa of stomach and 106 other cell types or tissues"/>
</dbReference>
<dbReference type="ExpressionAtlas" id="O00341">
    <property type="expression patterns" value="baseline and differential"/>
</dbReference>
<dbReference type="GO" id="GO:0005886">
    <property type="term" value="C:plasma membrane"/>
    <property type="evidence" value="ECO:0000318"/>
    <property type="project" value="GO_Central"/>
</dbReference>
<dbReference type="GO" id="GO:0098794">
    <property type="term" value="C:postsynapse"/>
    <property type="evidence" value="ECO:0007669"/>
    <property type="project" value="GOC"/>
</dbReference>
<dbReference type="GO" id="GO:0097060">
    <property type="term" value="C:synaptic membrane"/>
    <property type="evidence" value="ECO:0007669"/>
    <property type="project" value="UniProtKB-SubCell"/>
</dbReference>
<dbReference type="GO" id="GO:0008068">
    <property type="term" value="F:extracellularly glutamate-gated chloride channel activity"/>
    <property type="evidence" value="ECO:0000250"/>
    <property type="project" value="UniProtKB"/>
</dbReference>
<dbReference type="GO" id="GO:0015501">
    <property type="term" value="F:glutamate:sodium symporter activity"/>
    <property type="evidence" value="ECO:0000314"/>
    <property type="project" value="UniProtKB"/>
</dbReference>
<dbReference type="GO" id="GO:0005314">
    <property type="term" value="F:high-affinity L-glutamate transmembrane transporter activity"/>
    <property type="evidence" value="ECO:0000304"/>
    <property type="project" value="Reactome"/>
</dbReference>
<dbReference type="GO" id="GO:0005313">
    <property type="term" value="F:L-glutamate transmembrane transporter activity"/>
    <property type="evidence" value="ECO:0000318"/>
    <property type="project" value="GO_Central"/>
</dbReference>
<dbReference type="GO" id="GO:0015175">
    <property type="term" value="F:neutral L-amino acid transmembrane transporter activity"/>
    <property type="evidence" value="ECO:0000318"/>
    <property type="project" value="GO_Central"/>
</dbReference>
<dbReference type="GO" id="GO:1902476">
    <property type="term" value="P:chloride transmembrane transport"/>
    <property type="evidence" value="ECO:0000250"/>
    <property type="project" value="UniProtKB"/>
</dbReference>
<dbReference type="GO" id="GO:0006835">
    <property type="term" value="P:dicarboxylic acid transport"/>
    <property type="evidence" value="ECO:0000304"/>
    <property type="project" value="UniProtKB"/>
</dbReference>
<dbReference type="GO" id="GO:0015813">
    <property type="term" value="P:L-glutamate transmembrane transport"/>
    <property type="evidence" value="ECO:0000250"/>
    <property type="project" value="UniProtKB"/>
</dbReference>
<dbReference type="GO" id="GO:0006811">
    <property type="term" value="P:monoatomic ion transport"/>
    <property type="evidence" value="ECO:0000304"/>
    <property type="project" value="Reactome"/>
</dbReference>
<dbReference type="GO" id="GO:0006836">
    <property type="term" value="P:neurotransmitter transport"/>
    <property type="evidence" value="ECO:0000304"/>
    <property type="project" value="Reactome"/>
</dbReference>
<dbReference type="GO" id="GO:0001504">
    <property type="term" value="P:neurotransmitter uptake"/>
    <property type="evidence" value="ECO:0000314"/>
    <property type="project" value="SynGO"/>
</dbReference>
<dbReference type="FunFam" id="1.10.3860.10:FF:000002">
    <property type="entry name" value="Amino acid transporter"/>
    <property type="match status" value="1"/>
</dbReference>
<dbReference type="Gene3D" id="1.10.3860.10">
    <property type="entry name" value="Sodium:dicarboxylate symporter"/>
    <property type="match status" value="1"/>
</dbReference>
<dbReference type="InterPro" id="IPR050746">
    <property type="entry name" value="DAACS"/>
</dbReference>
<dbReference type="InterPro" id="IPR001991">
    <property type="entry name" value="Na-dicarboxylate_symporter"/>
</dbReference>
<dbReference type="InterPro" id="IPR018107">
    <property type="entry name" value="Na-dicarboxylate_symporter_CS"/>
</dbReference>
<dbReference type="InterPro" id="IPR036458">
    <property type="entry name" value="Na:dicarbo_symporter_sf"/>
</dbReference>
<dbReference type="PANTHER" id="PTHR11958:SF22">
    <property type="entry name" value="EXCITATORY AMINO ACID TRANSPORTER 5"/>
    <property type="match status" value="1"/>
</dbReference>
<dbReference type="PANTHER" id="PTHR11958">
    <property type="entry name" value="SODIUM/DICARBOXYLATE SYMPORTER-RELATED"/>
    <property type="match status" value="1"/>
</dbReference>
<dbReference type="Pfam" id="PF00375">
    <property type="entry name" value="SDF"/>
    <property type="match status" value="1"/>
</dbReference>
<dbReference type="PRINTS" id="PR00173">
    <property type="entry name" value="EDTRNSPORT"/>
</dbReference>
<dbReference type="SUPFAM" id="SSF118215">
    <property type="entry name" value="Proton glutamate symport protein"/>
    <property type="match status" value="1"/>
</dbReference>
<dbReference type="PROSITE" id="PS00713">
    <property type="entry name" value="NA_DICARBOXYL_SYMP_1"/>
    <property type="match status" value="1"/>
</dbReference>
<dbReference type="PROSITE" id="PS00714">
    <property type="entry name" value="NA_DICARBOXYL_SYMP_2"/>
    <property type="match status" value="1"/>
</dbReference>
<comment type="function">
    <text evidence="1 5">Sodium-dependent, high-affinity amino acid transporter that mediates the uptake of L-glutamate and also L-aspartate and D-aspartate. Functions as a symporter that transports one amino acid molecule together with two or three Na(+) ions and one proton, in parallel with the counter-transport of one K(+) ion (PubMed:9108121). Acts primarily as an inhibitory glutamate-gated chloride channel being a major inhibitory presynaptic receptor at mammalian rod bipolar cell axon terminals. Glutamate binding gates a large Cl(-) conductance that mediates inhibition, affecting visual processing in the retina (By similarity).</text>
</comment>
<comment type="catalytic activity">
    <reaction evidence="5">
        <text>K(+)(in) + L-glutamate(out) + 3 Na(+)(out) + H(+)(out) = K(+)(out) + L-glutamate(in) + 3 Na(+)(in) + H(+)(in)</text>
        <dbReference type="Rhea" id="RHEA:70699"/>
        <dbReference type="ChEBI" id="CHEBI:15378"/>
        <dbReference type="ChEBI" id="CHEBI:29101"/>
        <dbReference type="ChEBI" id="CHEBI:29103"/>
        <dbReference type="ChEBI" id="CHEBI:29985"/>
    </reaction>
</comment>
<comment type="catalytic activity">
    <reaction evidence="5">
        <text>K(+)(in) + L-aspartate(out) + 3 Na(+)(out) + H(+)(out) = K(+)(out) + L-aspartate(in) + 3 Na(+)(in) + H(+)(in)</text>
        <dbReference type="Rhea" id="RHEA:70851"/>
        <dbReference type="ChEBI" id="CHEBI:15378"/>
        <dbReference type="ChEBI" id="CHEBI:29101"/>
        <dbReference type="ChEBI" id="CHEBI:29103"/>
        <dbReference type="ChEBI" id="CHEBI:29991"/>
    </reaction>
</comment>
<comment type="catalytic activity">
    <reaction evidence="5">
        <text>D-aspartate(out) + K(+)(in) + 3 Na(+)(out) + H(+)(out) = D-aspartate(in) + K(+)(out) + 3 Na(+)(in) + H(+)(in)</text>
        <dbReference type="Rhea" id="RHEA:71379"/>
        <dbReference type="ChEBI" id="CHEBI:15378"/>
        <dbReference type="ChEBI" id="CHEBI:29101"/>
        <dbReference type="ChEBI" id="CHEBI:29103"/>
        <dbReference type="ChEBI" id="CHEBI:29990"/>
    </reaction>
</comment>
<comment type="subunit">
    <text evidence="9">Interacts with the PDZ domains of DLG4.</text>
</comment>
<comment type="subcellular location">
    <subcellularLocation>
        <location evidence="1">Photoreceptor inner segment membrane</location>
        <topology evidence="2">Multi-pass membrane protein</topology>
    </subcellularLocation>
    <subcellularLocation>
        <location evidence="1">Synaptic cell membrane</location>
        <topology evidence="2">Multi-pass membrane protein</topology>
    </subcellularLocation>
    <text evidence="1">Located in both cone and rod photoreceptor terminals and in axon terminals of rod bipolar cells.</text>
</comment>
<comment type="alternative products">
    <event type="alternative splicing"/>
    <isoform>
        <id>O00341-1</id>
        <name>1</name>
        <sequence type="displayed"/>
    </isoform>
    <isoform>
        <id>O00341-2</id>
        <name>2</name>
        <sequence type="described" ref="VSP_056560 VSP_056561"/>
    </isoform>
</comment>
<comment type="tissue specificity">
    <text evidence="5">Expressed primarily in retina. Detectable in liver, heart, muscle and brain.</text>
</comment>
<comment type="similarity">
    <text evidence="8">Belongs to the dicarboxylate/amino acid:cation symporter (DAACS) (TC 2.A.23) family. SLC1A7 subfamily.</text>
</comment>
<reference key="1">
    <citation type="journal article" date="1997" name="Proc. Natl. Acad. Sci. U.S.A.">
        <title>Excitatory amino acid transporter 5, a retinal glutamate transporter coupled to a chloride conductance.</title>
        <authorList>
            <person name="Arriza J.L."/>
            <person name="Eliasof S."/>
            <person name="Kavanaugh M.P."/>
            <person name="Amara S.G."/>
        </authorList>
    </citation>
    <scope>NUCLEOTIDE SEQUENCE [MRNA] (ISOFORM 1)</scope>
    <scope>VARIANT ARG-537</scope>
    <scope>TISSUE SPECIFICITY</scope>
    <scope>FUNCTION</scope>
    <scope>TRANSPORTER ACTIVITY</scope>
    <source>
        <tissue>Retina</tissue>
    </source>
</reference>
<reference key="2">
    <citation type="journal article" date="2006" name="Nature">
        <title>The DNA sequence and biological annotation of human chromosome 1.</title>
        <authorList>
            <person name="Gregory S.G."/>
            <person name="Barlow K.F."/>
            <person name="McLay K.E."/>
            <person name="Kaul R."/>
            <person name="Swarbreck D."/>
            <person name="Dunham A."/>
            <person name="Scott C.E."/>
            <person name="Howe K.L."/>
            <person name="Woodfine K."/>
            <person name="Spencer C.C.A."/>
            <person name="Jones M.C."/>
            <person name="Gillson C."/>
            <person name="Searle S."/>
            <person name="Zhou Y."/>
            <person name="Kokocinski F."/>
            <person name="McDonald L."/>
            <person name="Evans R."/>
            <person name="Phillips K."/>
            <person name="Atkinson A."/>
            <person name="Cooper R."/>
            <person name="Jones C."/>
            <person name="Hall R.E."/>
            <person name="Andrews T.D."/>
            <person name="Lloyd C."/>
            <person name="Ainscough R."/>
            <person name="Almeida J.P."/>
            <person name="Ambrose K.D."/>
            <person name="Anderson F."/>
            <person name="Andrew R.W."/>
            <person name="Ashwell R.I.S."/>
            <person name="Aubin K."/>
            <person name="Babbage A.K."/>
            <person name="Bagguley C.L."/>
            <person name="Bailey J."/>
            <person name="Beasley H."/>
            <person name="Bethel G."/>
            <person name="Bird C.P."/>
            <person name="Bray-Allen S."/>
            <person name="Brown J.Y."/>
            <person name="Brown A.J."/>
            <person name="Buckley D."/>
            <person name="Burton J."/>
            <person name="Bye J."/>
            <person name="Carder C."/>
            <person name="Chapman J.C."/>
            <person name="Clark S.Y."/>
            <person name="Clarke G."/>
            <person name="Clee C."/>
            <person name="Cobley V."/>
            <person name="Collier R.E."/>
            <person name="Corby N."/>
            <person name="Coville G.J."/>
            <person name="Davies J."/>
            <person name="Deadman R."/>
            <person name="Dunn M."/>
            <person name="Earthrowl M."/>
            <person name="Ellington A.G."/>
            <person name="Errington H."/>
            <person name="Frankish A."/>
            <person name="Frankland J."/>
            <person name="French L."/>
            <person name="Garner P."/>
            <person name="Garnett J."/>
            <person name="Gay L."/>
            <person name="Ghori M.R.J."/>
            <person name="Gibson R."/>
            <person name="Gilby L.M."/>
            <person name="Gillett W."/>
            <person name="Glithero R.J."/>
            <person name="Grafham D.V."/>
            <person name="Griffiths C."/>
            <person name="Griffiths-Jones S."/>
            <person name="Grocock R."/>
            <person name="Hammond S."/>
            <person name="Harrison E.S.I."/>
            <person name="Hart E."/>
            <person name="Haugen E."/>
            <person name="Heath P.D."/>
            <person name="Holmes S."/>
            <person name="Holt K."/>
            <person name="Howden P.J."/>
            <person name="Hunt A.R."/>
            <person name="Hunt S.E."/>
            <person name="Hunter G."/>
            <person name="Isherwood J."/>
            <person name="James R."/>
            <person name="Johnson C."/>
            <person name="Johnson D."/>
            <person name="Joy A."/>
            <person name="Kay M."/>
            <person name="Kershaw J.K."/>
            <person name="Kibukawa M."/>
            <person name="Kimberley A.M."/>
            <person name="King A."/>
            <person name="Knights A.J."/>
            <person name="Lad H."/>
            <person name="Laird G."/>
            <person name="Lawlor S."/>
            <person name="Leongamornlert D.A."/>
            <person name="Lloyd D.M."/>
            <person name="Loveland J."/>
            <person name="Lovell J."/>
            <person name="Lush M.J."/>
            <person name="Lyne R."/>
            <person name="Martin S."/>
            <person name="Mashreghi-Mohammadi M."/>
            <person name="Matthews L."/>
            <person name="Matthews N.S.W."/>
            <person name="McLaren S."/>
            <person name="Milne S."/>
            <person name="Mistry S."/>
            <person name="Moore M.J.F."/>
            <person name="Nickerson T."/>
            <person name="O'Dell C.N."/>
            <person name="Oliver K."/>
            <person name="Palmeiri A."/>
            <person name="Palmer S.A."/>
            <person name="Parker A."/>
            <person name="Patel D."/>
            <person name="Pearce A.V."/>
            <person name="Peck A.I."/>
            <person name="Pelan S."/>
            <person name="Phelps K."/>
            <person name="Phillimore B.J."/>
            <person name="Plumb R."/>
            <person name="Rajan J."/>
            <person name="Raymond C."/>
            <person name="Rouse G."/>
            <person name="Saenphimmachak C."/>
            <person name="Sehra H.K."/>
            <person name="Sheridan E."/>
            <person name="Shownkeen R."/>
            <person name="Sims S."/>
            <person name="Skuce C.D."/>
            <person name="Smith M."/>
            <person name="Steward C."/>
            <person name="Subramanian S."/>
            <person name="Sycamore N."/>
            <person name="Tracey A."/>
            <person name="Tromans A."/>
            <person name="Van Helmond Z."/>
            <person name="Wall M."/>
            <person name="Wallis J.M."/>
            <person name="White S."/>
            <person name="Whitehead S.L."/>
            <person name="Wilkinson J.E."/>
            <person name="Willey D.L."/>
            <person name="Williams H."/>
            <person name="Wilming L."/>
            <person name="Wray P.W."/>
            <person name="Wu Z."/>
            <person name="Coulson A."/>
            <person name="Vaudin M."/>
            <person name="Sulston J.E."/>
            <person name="Durbin R.M."/>
            <person name="Hubbard T."/>
            <person name="Wooster R."/>
            <person name="Dunham I."/>
            <person name="Carter N.P."/>
            <person name="McVean G."/>
            <person name="Ross M.T."/>
            <person name="Harrow J."/>
            <person name="Olson M.V."/>
            <person name="Beck S."/>
            <person name="Rogers J."/>
            <person name="Bentley D.R."/>
        </authorList>
    </citation>
    <scope>NUCLEOTIDE SEQUENCE [LARGE SCALE GENOMIC DNA]</scope>
</reference>
<reference key="3">
    <citation type="submission" date="2005-09" db="EMBL/GenBank/DDBJ databases">
        <authorList>
            <person name="Mural R.J."/>
            <person name="Istrail S."/>
            <person name="Sutton G.G."/>
            <person name="Florea L."/>
            <person name="Halpern A.L."/>
            <person name="Mobarry C.M."/>
            <person name="Lippert R."/>
            <person name="Walenz B."/>
            <person name="Shatkay H."/>
            <person name="Dew I."/>
            <person name="Miller J.R."/>
            <person name="Flanigan M.J."/>
            <person name="Edwards N.J."/>
            <person name="Bolanos R."/>
            <person name="Fasulo D."/>
            <person name="Halldorsson B.V."/>
            <person name="Hannenhalli S."/>
            <person name="Turner R."/>
            <person name="Yooseph S."/>
            <person name="Lu F."/>
            <person name="Nusskern D.R."/>
            <person name="Shue B.C."/>
            <person name="Zheng X.H."/>
            <person name="Zhong F."/>
            <person name="Delcher A.L."/>
            <person name="Huson D.H."/>
            <person name="Kravitz S.A."/>
            <person name="Mouchard L."/>
            <person name="Reinert K."/>
            <person name="Remington K.A."/>
            <person name="Clark A.G."/>
            <person name="Waterman M.S."/>
            <person name="Eichler E.E."/>
            <person name="Adams M.D."/>
            <person name="Hunkapiller M.W."/>
            <person name="Myers E.W."/>
            <person name="Venter J.C."/>
        </authorList>
    </citation>
    <scope>NUCLEOTIDE SEQUENCE [LARGE SCALE GENOMIC DNA]</scope>
    <scope>VARIANT ARG-537</scope>
</reference>
<reference key="4">
    <citation type="journal article" date="2004" name="Genome Res.">
        <title>The status, quality, and expansion of the NIH full-length cDNA project: the Mammalian Gene Collection (MGC).</title>
        <authorList>
            <consortium name="The MGC Project Team"/>
        </authorList>
    </citation>
    <scope>NUCLEOTIDE SEQUENCE [LARGE SCALE MRNA] (ISOFORMS 1 AND 2)</scope>
    <scope>VARIANT ARG-537</scope>
    <source>
        <tissue>Eye</tissue>
    </source>
</reference>
<reference key="5">
    <citation type="journal article" date="2006" name="Science">
        <title>The consensus coding sequences of human breast and colorectal cancers.</title>
        <authorList>
            <person name="Sjoeblom T."/>
            <person name="Jones S."/>
            <person name="Wood L.D."/>
            <person name="Parsons D.W."/>
            <person name="Lin J."/>
            <person name="Barber T.D."/>
            <person name="Mandelker D."/>
            <person name="Leary R.J."/>
            <person name="Ptak J."/>
            <person name="Silliman N."/>
            <person name="Szabo S."/>
            <person name="Buckhaults P."/>
            <person name="Farrell C."/>
            <person name="Meeh P."/>
            <person name="Markowitz S.D."/>
            <person name="Willis J."/>
            <person name="Dawson D."/>
            <person name="Willson J.K.V."/>
            <person name="Gazdar A.F."/>
            <person name="Hartigan J."/>
            <person name="Wu L."/>
            <person name="Liu C."/>
            <person name="Parmigiani G."/>
            <person name="Park B.H."/>
            <person name="Bachman K.E."/>
            <person name="Papadopoulos N."/>
            <person name="Vogelstein B."/>
            <person name="Kinzler K.W."/>
            <person name="Velculescu V.E."/>
        </authorList>
    </citation>
    <scope>VARIANT [LARGE SCALE ANALYSIS] CYS-41</scope>
</reference>
<name>EAA5_HUMAN</name>
<proteinExistence type="evidence at protein level"/>
<accession>O00341</accession>
<accession>Q5VVZ0</accession>
<accession>Q969Z8</accession>
<accession>Q9BW45</accession>